<organism>
    <name type="scientific">Escherichia coli O6:K15:H31 (strain 536 / UPEC)</name>
    <dbReference type="NCBI Taxonomy" id="362663"/>
    <lineage>
        <taxon>Bacteria</taxon>
        <taxon>Pseudomonadati</taxon>
        <taxon>Pseudomonadota</taxon>
        <taxon>Gammaproteobacteria</taxon>
        <taxon>Enterobacterales</taxon>
        <taxon>Enterobacteriaceae</taxon>
        <taxon>Escherichia</taxon>
    </lineage>
</organism>
<dbReference type="EMBL" id="CP000247">
    <property type="protein sequence ID" value="ABG71433.1"/>
    <property type="molecule type" value="Genomic_DNA"/>
</dbReference>
<dbReference type="RefSeq" id="WP_000185249.1">
    <property type="nucleotide sequence ID" value="NC_008253.1"/>
</dbReference>
<dbReference type="SMR" id="Q0TC96"/>
<dbReference type="KEGG" id="ecp:ECP_3455"/>
<dbReference type="HOGENOM" id="CLU_056916_0_0_6"/>
<dbReference type="Proteomes" id="UP000009182">
    <property type="component" value="Chromosome"/>
</dbReference>
<dbReference type="GO" id="GO:0005886">
    <property type="term" value="C:plasma membrane"/>
    <property type="evidence" value="ECO:0007669"/>
    <property type="project" value="UniProtKB-SubCell"/>
</dbReference>
<dbReference type="GO" id="GO:0022857">
    <property type="term" value="F:transmembrane transporter activity"/>
    <property type="evidence" value="ECO:0007669"/>
    <property type="project" value="InterPro"/>
</dbReference>
<dbReference type="CDD" id="cd17333">
    <property type="entry name" value="MFS_FucP_MFSD4_like"/>
    <property type="match status" value="1"/>
</dbReference>
<dbReference type="FunFam" id="1.20.1250.20:FF:000032">
    <property type="entry name" value="Protein TsgA"/>
    <property type="match status" value="1"/>
</dbReference>
<dbReference type="FunFam" id="1.20.1250.20:FF:000052">
    <property type="entry name" value="Protein TsgA"/>
    <property type="match status" value="1"/>
</dbReference>
<dbReference type="Gene3D" id="1.20.1250.20">
    <property type="entry name" value="MFS general substrate transporter like domains"/>
    <property type="match status" value="2"/>
</dbReference>
<dbReference type="HAMAP" id="MF_01044">
    <property type="entry name" value="MFS_TsgA"/>
    <property type="match status" value="1"/>
</dbReference>
<dbReference type="InterPro" id="IPR011701">
    <property type="entry name" value="MFS"/>
</dbReference>
<dbReference type="InterPro" id="IPR020846">
    <property type="entry name" value="MFS_dom"/>
</dbReference>
<dbReference type="InterPro" id="IPR036259">
    <property type="entry name" value="MFS_trans_sf"/>
</dbReference>
<dbReference type="InterPro" id="IPR023528">
    <property type="entry name" value="MFS_TsgA"/>
</dbReference>
<dbReference type="InterPro" id="IPR050375">
    <property type="entry name" value="MFS_TsgA-like"/>
</dbReference>
<dbReference type="NCBIfam" id="NF002982">
    <property type="entry name" value="PRK03699.1"/>
    <property type="match status" value="1"/>
</dbReference>
<dbReference type="PANTHER" id="PTHR43702">
    <property type="entry name" value="L-FUCOSE-PROTON SYMPORTER"/>
    <property type="match status" value="1"/>
</dbReference>
<dbReference type="PANTHER" id="PTHR43702:SF3">
    <property type="entry name" value="PROTEIN TSGA"/>
    <property type="match status" value="1"/>
</dbReference>
<dbReference type="Pfam" id="PF07690">
    <property type="entry name" value="MFS_1"/>
    <property type="match status" value="1"/>
</dbReference>
<dbReference type="SUPFAM" id="SSF103473">
    <property type="entry name" value="MFS general substrate transporter"/>
    <property type="match status" value="1"/>
</dbReference>
<dbReference type="PROSITE" id="PS50850">
    <property type="entry name" value="MFS"/>
    <property type="match status" value="1"/>
</dbReference>
<sequence>MTNSNRIKLTWISFLSYALTGALVIVTGMVMGNIADYFNLPVSSMSNTFTFLNAGILISIFLNAWLMEIVPLKTQLRFGFLLMVLAVAGLMFSHSLALFSAAMFILGVVSGITMSIGTFLVTQMYEGRQRGSRLLFTDSFFSMAGMIFPMIAAFLLARSIEWYWVYACIGLVYVAIFILTFGCEFPALGKHAPKTDAPVEKEKWGIGVLFLSVAALCYILGQLGFISWVPEYAKGLGMSLNDAGTLVSNFWMSYMVGMWAFSFILRFFDLQRILTVLAGLAAILMYVFNTGTPAYMAWSILALGFFSSAIYTTIITLGSQQTKVPSPKLVNFVLTCGTIGTMLTFVVTGPIVEHSGPQAALLTANGLYAVVFVMCFLLGFVSRHRQHNTLTSH</sequence>
<feature type="chain" id="PRO_1000064248" description="Protein TsgA">
    <location>
        <begin position="1"/>
        <end position="393"/>
    </location>
</feature>
<feature type="transmembrane region" description="Helical" evidence="1">
    <location>
        <begin position="11"/>
        <end position="31"/>
    </location>
</feature>
<feature type="transmembrane region" description="Helical" evidence="1">
    <location>
        <begin position="51"/>
        <end position="71"/>
    </location>
</feature>
<feature type="transmembrane region" description="Helical" evidence="1">
    <location>
        <begin position="78"/>
        <end position="98"/>
    </location>
</feature>
<feature type="transmembrane region" description="Helical" evidence="1">
    <location>
        <begin position="101"/>
        <end position="121"/>
    </location>
</feature>
<feature type="transmembrane region" description="Helical" evidence="1">
    <location>
        <begin position="134"/>
        <end position="154"/>
    </location>
</feature>
<feature type="transmembrane region" description="Helical" evidence="1">
    <location>
        <begin position="162"/>
        <end position="182"/>
    </location>
</feature>
<feature type="transmembrane region" description="Helical" evidence="1">
    <location>
        <begin position="206"/>
        <end position="226"/>
    </location>
</feature>
<feature type="transmembrane region" description="Helical" evidence="1">
    <location>
        <begin position="245"/>
        <end position="265"/>
    </location>
</feature>
<feature type="transmembrane region" description="Helical" evidence="1">
    <location>
        <begin position="273"/>
        <end position="293"/>
    </location>
</feature>
<feature type="transmembrane region" description="Helical" evidence="1">
    <location>
        <begin position="297"/>
        <end position="317"/>
    </location>
</feature>
<feature type="transmembrane region" description="Helical" evidence="1">
    <location>
        <begin position="332"/>
        <end position="352"/>
    </location>
</feature>
<feature type="transmembrane region" description="Helical" evidence="1">
    <location>
        <begin position="361"/>
        <end position="381"/>
    </location>
</feature>
<comment type="subcellular location">
    <subcellularLocation>
        <location evidence="1">Cell inner membrane</location>
        <topology evidence="1">Multi-pass membrane protein</topology>
    </subcellularLocation>
</comment>
<comment type="similarity">
    <text evidence="1">Belongs to the major facilitator superfamily. TsgA family.</text>
</comment>
<keyword id="KW-0997">Cell inner membrane</keyword>
<keyword id="KW-1003">Cell membrane</keyword>
<keyword id="KW-0472">Membrane</keyword>
<keyword id="KW-0812">Transmembrane</keyword>
<keyword id="KW-1133">Transmembrane helix</keyword>
<name>TSGA_ECOL5</name>
<accession>Q0TC96</accession>
<protein>
    <recommendedName>
        <fullName evidence="1">Protein TsgA</fullName>
    </recommendedName>
</protein>
<proteinExistence type="inferred from homology"/>
<evidence type="ECO:0000255" key="1">
    <source>
        <dbReference type="HAMAP-Rule" id="MF_01044"/>
    </source>
</evidence>
<gene>
    <name evidence="1" type="primary">tsgA</name>
    <name type="ordered locus">ECP_3455</name>
</gene>
<reference key="1">
    <citation type="journal article" date="2006" name="Mol. Microbiol.">
        <title>Role of pathogenicity island-associated integrases in the genome plasticity of uropathogenic Escherichia coli strain 536.</title>
        <authorList>
            <person name="Hochhut B."/>
            <person name="Wilde C."/>
            <person name="Balling G."/>
            <person name="Middendorf B."/>
            <person name="Dobrindt U."/>
            <person name="Brzuszkiewicz E."/>
            <person name="Gottschalk G."/>
            <person name="Carniel E."/>
            <person name="Hacker J."/>
        </authorList>
    </citation>
    <scope>NUCLEOTIDE SEQUENCE [LARGE SCALE GENOMIC DNA]</scope>
    <source>
        <strain>536 / UPEC</strain>
    </source>
</reference>